<sequence length="328" mass="36964">MNQVDYLRISLIDRCNFRCQYCMPEGVELDYILKQQLLTNEELLTLIREVFIPVGFNRFRLTGGEPLLRPRVVDLVSAIATLPQTQDLSMTTNGFLLAPMAQNLYNAGLRRINISLDSLDADTFDQIIGNQGRSRWQQVWHGIQAAHSVGFDPLKLNVVVIPGVNDHEILDLAALTIDKQWHVRFIEFMPIGNVDLFGDRGWVSSAELRQQIRDRWGLTESQVRGAGPADVFKIPGAKGTLGFISQMSECFCDRCNRMRLSADGWLRPCLLNETGQIDLKTALRSGTSTAQLQEQVRHLLRMKPEINFKGRDSGIVGTYTRTMSQIGG</sequence>
<accession>B2J1M7</accession>
<dbReference type="EC" id="4.1.99.22" evidence="1"/>
<dbReference type="EMBL" id="CP001037">
    <property type="protein sequence ID" value="ACC80388.1"/>
    <property type="molecule type" value="Genomic_DNA"/>
</dbReference>
<dbReference type="RefSeq" id="WP_012408406.1">
    <property type="nucleotide sequence ID" value="NC_010628.1"/>
</dbReference>
<dbReference type="SMR" id="B2J1M7"/>
<dbReference type="STRING" id="63737.Npun_F1719"/>
<dbReference type="EnsemblBacteria" id="ACC80388">
    <property type="protein sequence ID" value="ACC80388"/>
    <property type="gene ID" value="Npun_F1719"/>
</dbReference>
<dbReference type="KEGG" id="npu:Npun_F1719"/>
<dbReference type="eggNOG" id="COG2896">
    <property type="taxonomic scope" value="Bacteria"/>
</dbReference>
<dbReference type="HOGENOM" id="CLU_009273_0_1_3"/>
<dbReference type="OrthoDB" id="9763993at2"/>
<dbReference type="PhylomeDB" id="B2J1M7"/>
<dbReference type="UniPathway" id="UPA00344"/>
<dbReference type="Proteomes" id="UP000001191">
    <property type="component" value="Chromosome"/>
</dbReference>
<dbReference type="GO" id="GO:0051539">
    <property type="term" value="F:4 iron, 4 sulfur cluster binding"/>
    <property type="evidence" value="ECO:0007669"/>
    <property type="project" value="UniProtKB-UniRule"/>
</dbReference>
<dbReference type="GO" id="GO:0061799">
    <property type="term" value="F:cyclic pyranopterin monophosphate synthase activity"/>
    <property type="evidence" value="ECO:0007669"/>
    <property type="project" value="TreeGrafter"/>
</dbReference>
<dbReference type="GO" id="GO:0061798">
    <property type="term" value="F:GTP 3',8'-cyclase activity"/>
    <property type="evidence" value="ECO:0007669"/>
    <property type="project" value="UniProtKB-UniRule"/>
</dbReference>
<dbReference type="GO" id="GO:0005525">
    <property type="term" value="F:GTP binding"/>
    <property type="evidence" value="ECO:0007669"/>
    <property type="project" value="UniProtKB-UniRule"/>
</dbReference>
<dbReference type="GO" id="GO:0046872">
    <property type="term" value="F:metal ion binding"/>
    <property type="evidence" value="ECO:0007669"/>
    <property type="project" value="UniProtKB-KW"/>
</dbReference>
<dbReference type="GO" id="GO:1904047">
    <property type="term" value="F:S-adenosyl-L-methionine binding"/>
    <property type="evidence" value="ECO:0007669"/>
    <property type="project" value="UniProtKB-UniRule"/>
</dbReference>
<dbReference type="GO" id="GO:0006777">
    <property type="term" value="P:Mo-molybdopterin cofactor biosynthetic process"/>
    <property type="evidence" value="ECO:0007669"/>
    <property type="project" value="UniProtKB-UniRule"/>
</dbReference>
<dbReference type="CDD" id="cd01335">
    <property type="entry name" value="Radical_SAM"/>
    <property type="match status" value="1"/>
</dbReference>
<dbReference type="CDD" id="cd21117">
    <property type="entry name" value="Twitch_MoaA"/>
    <property type="match status" value="1"/>
</dbReference>
<dbReference type="Gene3D" id="3.20.20.70">
    <property type="entry name" value="Aldolase class I"/>
    <property type="match status" value="1"/>
</dbReference>
<dbReference type="HAMAP" id="MF_01225_B">
    <property type="entry name" value="MoaA_B"/>
    <property type="match status" value="1"/>
</dbReference>
<dbReference type="InterPro" id="IPR013785">
    <property type="entry name" value="Aldolase_TIM"/>
</dbReference>
<dbReference type="InterPro" id="IPR006638">
    <property type="entry name" value="Elp3/MiaA/NifB-like_rSAM"/>
</dbReference>
<dbReference type="InterPro" id="IPR013483">
    <property type="entry name" value="MoaA"/>
</dbReference>
<dbReference type="InterPro" id="IPR000385">
    <property type="entry name" value="MoaA_NifB_PqqE_Fe-S-bd_CS"/>
</dbReference>
<dbReference type="InterPro" id="IPR010505">
    <property type="entry name" value="MoaA_twitch"/>
</dbReference>
<dbReference type="InterPro" id="IPR050105">
    <property type="entry name" value="MoCo_biosynth_MoaA/MoaC"/>
</dbReference>
<dbReference type="InterPro" id="IPR007197">
    <property type="entry name" value="rSAM"/>
</dbReference>
<dbReference type="NCBIfam" id="TIGR02666">
    <property type="entry name" value="moaA"/>
    <property type="match status" value="1"/>
</dbReference>
<dbReference type="PANTHER" id="PTHR22960:SF0">
    <property type="entry name" value="MOLYBDENUM COFACTOR BIOSYNTHESIS PROTEIN 1"/>
    <property type="match status" value="1"/>
</dbReference>
<dbReference type="PANTHER" id="PTHR22960">
    <property type="entry name" value="MOLYBDOPTERIN COFACTOR SYNTHESIS PROTEIN A"/>
    <property type="match status" value="1"/>
</dbReference>
<dbReference type="Pfam" id="PF13353">
    <property type="entry name" value="Fer4_12"/>
    <property type="match status" value="1"/>
</dbReference>
<dbReference type="Pfam" id="PF06463">
    <property type="entry name" value="Mob_synth_C"/>
    <property type="match status" value="1"/>
</dbReference>
<dbReference type="Pfam" id="PF04055">
    <property type="entry name" value="Radical_SAM"/>
    <property type="match status" value="1"/>
</dbReference>
<dbReference type="SFLD" id="SFLDG01383">
    <property type="entry name" value="cyclic_pyranopterin_phosphate"/>
    <property type="match status" value="1"/>
</dbReference>
<dbReference type="SFLD" id="SFLDG01067">
    <property type="entry name" value="SPASM/twitch_domain_containing"/>
    <property type="match status" value="1"/>
</dbReference>
<dbReference type="SMART" id="SM00729">
    <property type="entry name" value="Elp3"/>
    <property type="match status" value="1"/>
</dbReference>
<dbReference type="SUPFAM" id="SSF102114">
    <property type="entry name" value="Radical SAM enzymes"/>
    <property type="match status" value="1"/>
</dbReference>
<dbReference type="PROSITE" id="PS01305">
    <property type="entry name" value="MOAA_NIFB_PQQE"/>
    <property type="match status" value="1"/>
</dbReference>
<dbReference type="PROSITE" id="PS51918">
    <property type="entry name" value="RADICAL_SAM"/>
    <property type="match status" value="1"/>
</dbReference>
<gene>
    <name evidence="1" type="primary">moaA</name>
    <name type="ordered locus">Npun_F1719</name>
</gene>
<feature type="chain" id="PRO_1000139334" description="GTP 3',8-cyclase">
    <location>
        <begin position="1"/>
        <end position="328"/>
    </location>
</feature>
<feature type="domain" description="Radical SAM core" evidence="2">
    <location>
        <begin position="1"/>
        <end position="229"/>
    </location>
</feature>
<feature type="binding site" evidence="1">
    <location>
        <position position="8"/>
    </location>
    <ligand>
        <name>GTP</name>
        <dbReference type="ChEBI" id="CHEBI:37565"/>
    </ligand>
</feature>
<feature type="binding site" evidence="1">
    <location>
        <position position="15"/>
    </location>
    <ligand>
        <name>[4Fe-4S] cluster</name>
        <dbReference type="ChEBI" id="CHEBI:49883"/>
        <label>1</label>
        <note>4Fe-4S-S-AdoMet</note>
    </ligand>
</feature>
<feature type="binding site" evidence="1">
    <location>
        <position position="19"/>
    </location>
    <ligand>
        <name>[4Fe-4S] cluster</name>
        <dbReference type="ChEBI" id="CHEBI:49883"/>
        <label>1</label>
        <note>4Fe-4S-S-AdoMet</note>
    </ligand>
</feature>
<feature type="binding site" evidence="1">
    <location>
        <position position="21"/>
    </location>
    <ligand>
        <name>S-adenosyl-L-methionine</name>
        <dbReference type="ChEBI" id="CHEBI:59789"/>
    </ligand>
</feature>
<feature type="binding site" evidence="1">
    <location>
        <position position="22"/>
    </location>
    <ligand>
        <name>[4Fe-4S] cluster</name>
        <dbReference type="ChEBI" id="CHEBI:49883"/>
        <label>1</label>
        <note>4Fe-4S-S-AdoMet</note>
    </ligand>
</feature>
<feature type="binding site" evidence="1">
    <location>
        <position position="60"/>
    </location>
    <ligand>
        <name>GTP</name>
        <dbReference type="ChEBI" id="CHEBI:37565"/>
    </ligand>
</feature>
<feature type="binding site" evidence="1">
    <location>
        <position position="64"/>
    </location>
    <ligand>
        <name>S-adenosyl-L-methionine</name>
        <dbReference type="ChEBI" id="CHEBI:59789"/>
    </ligand>
</feature>
<feature type="binding site" evidence="1">
    <location>
        <position position="91"/>
    </location>
    <ligand>
        <name>GTP</name>
        <dbReference type="ChEBI" id="CHEBI:37565"/>
    </ligand>
</feature>
<feature type="binding site" evidence="1">
    <location>
        <position position="115"/>
    </location>
    <ligand>
        <name>S-adenosyl-L-methionine</name>
        <dbReference type="ChEBI" id="CHEBI:59789"/>
    </ligand>
</feature>
<feature type="binding site" evidence="1">
    <location>
        <position position="155"/>
    </location>
    <ligand>
        <name>GTP</name>
        <dbReference type="ChEBI" id="CHEBI:37565"/>
    </ligand>
</feature>
<feature type="binding site" evidence="1">
    <location>
        <position position="189"/>
    </location>
    <ligand>
        <name>S-adenosyl-L-methionine</name>
        <dbReference type="ChEBI" id="CHEBI:59789"/>
    </ligand>
</feature>
<feature type="binding site" evidence="1">
    <location>
        <position position="252"/>
    </location>
    <ligand>
        <name>[4Fe-4S] cluster</name>
        <dbReference type="ChEBI" id="CHEBI:49883"/>
        <label>2</label>
        <note>4Fe-4S-substrate</note>
    </ligand>
</feature>
<feature type="binding site" evidence="1">
    <location>
        <position position="255"/>
    </location>
    <ligand>
        <name>[4Fe-4S] cluster</name>
        <dbReference type="ChEBI" id="CHEBI:49883"/>
        <label>2</label>
        <note>4Fe-4S-substrate</note>
    </ligand>
</feature>
<feature type="binding site" evidence="1">
    <location>
        <begin position="257"/>
        <end position="259"/>
    </location>
    <ligand>
        <name>GTP</name>
        <dbReference type="ChEBI" id="CHEBI:37565"/>
    </ligand>
</feature>
<feature type="binding site" evidence="1">
    <location>
        <position position="269"/>
    </location>
    <ligand>
        <name>[4Fe-4S] cluster</name>
        <dbReference type="ChEBI" id="CHEBI:49883"/>
        <label>2</label>
        <note>4Fe-4S-substrate</note>
    </ligand>
</feature>
<comment type="function">
    <text evidence="1">Catalyzes the cyclization of GTP to (8S)-3',8-cyclo-7,8-dihydroguanosine 5'-triphosphate.</text>
</comment>
<comment type="catalytic activity">
    <reaction evidence="1">
        <text>GTP + AH2 + S-adenosyl-L-methionine = (8S)-3',8-cyclo-7,8-dihydroguanosine 5'-triphosphate + 5'-deoxyadenosine + L-methionine + A + H(+)</text>
        <dbReference type="Rhea" id="RHEA:49576"/>
        <dbReference type="ChEBI" id="CHEBI:13193"/>
        <dbReference type="ChEBI" id="CHEBI:15378"/>
        <dbReference type="ChEBI" id="CHEBI:17319"/>
        <dbReference type="ChEBI" id="CHEBI:17499"/>
        <dbReference type="ChEBI" id="CHEBI:37565"/>
        <dbReference type="ChEBI" id="CHEBI:57844"/>
        <dbReference type="ChEBI" id="CHEBI:59789"/>
        <dbReference type="ChEBI" id="CHEBI:131766"/>
        <dbReference type="EC" id="4.1.99.22"/>
    </reaction>
</comment>
<comment type="cofactor">
    <cofactor evidence="1">
        <name>[4Fe-4S] cluster</name>
        <dbReference type="ChEBI" id="CHEBI:49883"/>
    </cofactor>
    <text evidence="1">Binds 2 [4Fe-4S] clusters. Binds 1 [4Fe-4S] cluster coordinated with 3 cysteines and an exchangeable S-adenosyl-L-methionine and 1 [4Fe-4S] cluster coordinated with 3 cysteines and the GTP-derived substrate.</text>
</comment>
<comment type="pathway">
    <text evidence="1">Cofactor biosynthesis; molybdopterin biosynthesis.</text>
</comment>
<comment type="subunit">
    <text evidence="1">Monomer and homodimer.</text>
</comment>
<comment type="similarity">
    <text evidence="1">Belongs to the radical SAM superfamily. MoaA family.</text>
</comment>
<evidence type="ECO:0000255" key="1">
    <source>
        <dbReference type="HAMAP-Rule" id="MF_01225"/>
    </source>
</evidence>
<evidence type="ECO:0000255" key="2">
    <source>
        <dbReference type="PROSITE-ProRule" id="PRU01266"/>
    </source>
</evidence>
<name>MOAA_NOSP7</name>
<proteinExistence type="inferred from homology"/>
<protein>
    <recommendedName>
        <fullName evidence="1">GTP 3',8-cyclase</fullName>
        <ecNumber evidence="1">4.1.99.22</ecNumber>
    </recommendedName>
    <alternativeName>
        <fullName evidence="1">Molybdenum cofactor biosynthesis protein A</fullName>
    </alternativeName>
</protein>
<organism>
    <name type="scientific">Nostoc punctiforme (strain ATCC 29133 / PCC 73102)</name>
    <dbReference type="NCBI Taxonomy" id="63737"/>
    <lineage>
        <taxon>Bacteria</taxon>
        <taxon>Bacillati</taxon>
        <taxon>Cyanobacteriota</taxon>
        <taxon>Cyanophyceae</taxon>
        <taxon>Nostocales</taxon>
        <taxon>Nostocaceae</taxon>
        <taxon>Nostoc</taxon>
    </lineage>
</organism>
<reference key="1">
    <citation type="journal article" date="2013" name="Plant Physiol.">
        <title>A Nostoc punctiforme Sugar Transporter Necessary to Establish a Cyanobacterium-Plant Symbiosis.</title>
        <authorList>
            <person name="Ekman M."/>
            <person name="Picossi S."/>
            <person name="Campbell E.L."/>
            <person name="Meeks J.C."/>
            <person name="Flores E."/>
        </authorList>
    </citation>
    <scope>NUCLEOTIDE SEQUENCE [LARGE SCALE GENOMIC DNA]</scope>
    <source>
        <strain>ATCC 29133 / PCC 73102</strain>
    </source>
</reference>
<keyword id="KW-0004">4Fe-4S</keyword>
<keyword id="KW-0342">GTP-binding</keyword>
<keyword id="KW-0408">Iron</keyword>
<keyword id="KW-0411">Iron-sulfur</keyword>
<keyword id="KW-0456">Lyase</keyword>
<keyword id="KW-0479">Metal-binding</keyword>
<keyword id="KW-0501">Molybdenum cofactor biosynthesis</keyword>
<keyword id="KW-0547">Nucleotide-binding</keyword>
<keyword id="KW-1185">Reference proteome</keyword>
<keyword id="KW-0949">S-adenosyl-L-methionine</keyword>